<proteinExistence type="inferred from homology"/>
<sequence>MRIDGREKDQLRTVKITTNYIKHAEGSVLIEMGDTRVVCTATVEDKVPPFAKGEGKGWITAEYGMLPRSTETRNVREATKGRQSGRTLEIQRLIGRALRGVVDLKALGERTLWIDCDVIQADGGTRTAAITGSFVALALALNKLVEEGILPVIPLKDFVAAVSVGIVDGEEILDLNFEEDSKALVDMNVVMTGSNRFVEVQGTGEEATFSMEELQRLLTLAQKGIRELIELQKQALGDIARRIGMENAADSNSQ</sequence>
<evidence type="ECO:0000255" key="1">
    <source>
        <dbReference type="HAMAP-Rule" id="MF_00564"/>
    </source>
</evidence>
<reference key="1">
    <citation type="journal article" date="2005" name="PLoS Genet.">
        <title>Life in hot carbon monoxide: the complete genome sequence of Carboxydothermus hydrogenoformans Z-2901.</title>
        <authorList>
            <person name="Wu M."/>
            <person name="Ren Q."/>
            <person name="Durkin A.S."/>
            <person name="Daugherty S.C."/>
            <person name="Brinkac L.M."/>
            <person name="Dodson R.J."/>
            <person name="Madupu R."/>
            <person name="Sullivan S.A."/>
            <person name="Kolonay J.F."/>
            <person name="Nelson W.C."/>
            <person name="Tallon L.J."/>
            <person name="Jones K.M."/>
            <person name="Ulrich L.E."/>
            <person name="Gonzalez J.M."/>
            <person name="Zhulin I.B."/>
            <person name="Robb F.T."/>
            <person name="Eisen J.A."/>
        </authorList>
    </citation>
    <scope>NUCLEOTIDE SEQUENCE [LARGE SCALE GENOMIC DNA]</scope>
    <source>
        <strain>ATCC BAA-161 / DSM 6008 / Z-2901</strain>
    </source>
</reference>
<accession>Q3AFA0</accession>
<name>RNPH_CARHZ</name>
<feature type="chain" id="PRO_1000061130" description="Ribonuclease PH">
    <location>
        <begin position="1"/>
        <end position="254"/>
    </location>
</feature>
<feature type="binding site" evidence="1">
    <location>
        <position position="86"/>
    </location>
    <ligand>
        <name>phosphate</name>
        <dbReference type="ChEBI" id="CHEBI:43474"/>
        <note>substrate</note>
    </ligand>
</feature>
<feature type="binding site" evidence="1">
    <location>
        <begin position="124"/>
        <end position="126"/>
    </location>
    <ligand>
        <name>phosphate</name>
        <dbReference type="ChEBI" id="CHEBI:43474"/>
        <note>substrate</note>
    </ligand>
</feature>
<protein>
    <recommendedName>
        <fullName evidence="1">Ribonuclease PH</fullName>
        <shortName evidence="1">RNase PH</shortName>
        <ecNumber evidence="1">2.7.7.56</ecNumber>
    </recommendedName>
    <alternativeName>
        <fullName evidence="1">tRNA nucleotidyltransferase</fullName>
    </alternativeName>
</protein>
<keyword id="KW-0548">Nucleotidyltransferase</keyword>
<keyword id="KW-1185">Reference proteome</keyword>
<keyword id="KW-0694">RNA-binding</keyword>
<keyword id="KW-0698">rRNA processing</keyword>
<keyword id="KW-0808">Transferase</keyword>
<keyword id="KW-0819">tRNA processing</keyword>
<keyword id="KW-0820">tRNA-binding</keyword>
<gene>
    <name evidence="1" type="primary">rph</name>
    <name type="ordered locus">CHY_0314</name>
</gene>
<organism>
    <name type="scientific">Carboxydothermus hydrogenoformans (strain ATCC BAA-161 / DSM 6008 / Z-2901)</name>
    <dbReference type="NCBI Taxonomy" id="246194"/>
    <lineage>
        <taxon>Bacteria</taxon>
        <taxon>Bacillati</taxon>
        <taxon>Bacillota</taxon>
        <taxon>Clostridia</taxon>
        <taxon>Thermoanaerobacterales</taxon>
        <taxon>Thermoanaerobacteraceae</taxon>
        <taxon>Carboxydothermus</taxon>
    </lineage>
</organism>
<dbReference type="EC" id="2.7.7.56" evidence="1"/>
<dbReference type="EMBL" id="CP000141">
    <property type="protein sequence ID" value="ABB13662.1"/>
    <property type="molecule type" value="Genomic_DNA"/>
</dbReference>
<dbReference type="RefSeq" id="WP_011343260.1">
    <property type="nucleotide sequence ID" value="NC_007503.1"/>
</dbReference>
<dbReference type="SMR" id="Q3AFA0"/>
<dbReference type="FunCoup" id="Q3AFA0">
    <property type="interactions" value="293"/>
</dbReference>
<dbReference type="STRING" id="246194.CHY_0314"/>
<dbReference type="KEGG" id="chy:CHY_0314"/>
<dbReference type="eggNOG" id="COG0689">
    <property type="taxonomic scope" value="Bacteria"/>
</dbReference>
<dbReference type="HOGENOM" id="CLU_050858_0_0_9"/>
<dbReference type="InParanoid" id="Q3AFA0"/>
<dbReference type="OrthoDB" id="9807456at2"/>
<dbReference type="Proteomes" id="UP000002706">
    <property type="component" value="Chromosome"/>
</dbReference>
<dbReference type="GO" id="GO:0000175">
    <property type="term" value="F:3'-5'-RNA exonuclease activity"/>
    <property type="evidence" value="ECO:0007669"/>
    <property type="project" value="UniProtKB-UniRule"/>
</dbReference>
<dbReference type="GO" id="GO:0000049">
    <property type="term" value="F:tRNA binding"/>
    <property type="evidence" value="ECO:0007669"/>
    <property type="project" value="UniProtKB-UniRule"/>
</dbReference>
<dbReference type="GO" id="GO:0009022">
    <property type="term" value="F:tRNA nucleotidyltransferase activity"/>
    <property type="evidence" value="ECO:0007669"/>
    <property type="project" value="UniProtKB-UniRule"/>
</dbReference>
<dbReference type="GO" id="GO:0016075">
    <property type="term" value="P:rRNA catabolic process"/>
    <property type="evidence" value="ECO:0007669"/>
    <property type="project" value="UniProtKB-UniRule"/>
</dbReference>
<dbReference type="GO" id="GO:0006364">
    <property type="term" value="P:rRNA processing"/>
    <property type="evidence" value="ECO:0007669"/>
    <property type="project" value="UniProtKB-KW"/>
</dbReference>
<dbReference type="GO" id="GO:0008033">
    <property type="term" value="P:tRNA processing"/>
    <property type="evidence" value="ECO:0007669"/>
    <property type="project" value="UniProtKB-UniRule"/>
</dbReference>
<dbReference type="CDD" id="cd11362">
    <property type="entry name" value="RNase_PH_bact"/>
    <property type="match status" value="1"/>
</dbReference>
<dbReference type="FunFam" id="3.30.230.70:FF:000003">
    <property type="entry name" value="Ribonuclease PH"/>
    <property type="match status" value="1"/>
</dbReference>
<dbReference type="Gene3D" id="3.30.230.70">
    <property type="entry name" value="GHMP Kinase, N-terminal domain"/>
    <property type="match status" value="1"/>
</dbReference>
<dbReference type="HAMAP" id="MF_00564">
    <property type="entry name" value="RNase_PH"/>
    <property type="match status" value="1"/>
</dbReference>
<dbReference type="InterPro" id="IPR001247">
    <property type="entry name" value="ExoRNase_PH_dom1"/>
</dbReference>
<dbReference type="InterPro" id="IPR015847">
    <property type="entry name" value="ExoRNase_PH_dom2"/>
</dbReference>
<dbReference type="InterPro" id="IPR036345">
    <property type="entry name" value="ExoRNase_PH_dom2_sf"/>
</dbReference>
<dbReference type="InterPro" id="IPR027408">
    <property type="entry name" value="PNPase/RNase_PH_dom_sf"/>
</dbReference>
<dbReference type="InterPro" id="IPR020568">
    <property type="entry name" value="Ribosomal_Su5_D2-typ_SF"/>
</dbReference>
<dbReference type="InterPro" id="IPR050080">
    <property type="entry name" value="RNase_PH"/>
</dbReference>
<dbReference type="InterPro" id="IPR002381">
    <property type="entry name" value="RNase_PH_bac-type"/>
</dbReference>
<dbReference type="InterPro" id="IPR018336">
    <property type="entry name" value="RNase_PH_CS"/>
</dbReference>
<dbReference type="NCBIfam" id="TIGR01966">
    <property type="entry name" value="RNasePH"/>
    <property type="match status" value="1"/>
</dbReference>
<dbReference type="PANTHER" id="PTHR11953">
    <property type="entry name" value="EXOSOME COMPLEX COMPONENT"/>
    <property type="match status" value="1"/>
</dbReference>
<dbReference type="PANTHER" id="PTHR11953:SF0">
    <property type="entry name" value="EXOSOME COMPLEX COMPONENT RRP41"/>
    <property type="match status" value="1"/>
</dbReference>
<dbReference type="Pfam" id="PF01138">
    <property type="entry name" value="RNase_PH"/>
    <property type="match status" value="1"/>
</dbReference>
<dbReference type="Pfam" id="PF03725">
    <property type="entry name" value="RNase_PH_C"/>
    <property type="match status" value="1"/>
</dbReference>
<dbReference type="SUPFAM" id="SSF55666">
    <property type="entry name" value="Ribonuclease PH domain 2-like"/>
    <property type="match status" value="1"/>
</dbReference>
<dbReference type="SUPFAM" id="SSF54211">
    <property type="entry name" value="Ribosomal protein S5 domain 2-like"/>
    <property type="match status" value="1"/>
</dbReference>
<dbReference type="PROSITE" id="PS01277">
    <property type="entry name" value="RIBONUCLEASE_PH"/>
    <property type="match status" value="1"/>
</dbReference>
<comment type="function">
    <text evidence="1">Phosphorolytic 3'-5' exoribonuclease that plays an important role in tRNA 3'-end maturation. Removes nucleotide residues following the 3'-CCA terminus of tRNAs; can also add nucleotides to the ends of RNA molecules by using nucleoside diphosphates as substrates, but this may not be physiologically important. Probably plays a role in initiation of 16S rRNA degradation (leading to ribosome degradation) during starvation.</text>
</comment>
<comment type="catalytic activity">
    <reaction evidence="1">
        <text>tRNA(n+1) + phosphate = tRNA(n) + a ribonucleoside 5'-diphosphate</text>
        <dbReference type="Rhea" id="RHEA:10628"/>
        <dbReference type="Rhea" id="RHEA-COMP:17343"/>
        <dbReference type="Rhea" id="RHEA-COMP:17344"/>
        <dbReference type="ChEBI" id="CHEBI:43474"/>
        <dbReference type="ChEBI" id="CHEBI:57930"/>
        <dbReference type="ChEBI" id="CHEBI:173114"/>
        <dbReference type="EC" id="2.7.7.56"/>
    </reaction>
</comment>
<comment type="subunit">
    <text evidence="1">Homohexameric ring arranged as a trimer of dimers.</text>
</comment>
<comment type="similarity">
    <text evidence="1">Belongs to the RNase PH family.</text>
</comment>